<feature type="chain" id="PRO_0000214323" description="UPF0301 protein YqgE">
    <location>
        <begin position="1"/>
        <end position="187"/>
    </location>
</feature>
<reference key="1">
    <citation type="journal article" date="1997" name="Science">
        <title>The complete genome sequence of Escherichia coli K-12.</title>
        <authorList>
            <person name="Blattner F.R."/>
            <person name="Plunkett G. III"/>
            <person name="Bloch C.A."/>
            <person name="Perna N.T."/>
            <person name="Burland V."/>
            <person name="Riley M."/>
            <person name="Collado-Vides J."/>
            <person name="Glasner J.D."/>
            <person name="Rode C.K."/>
            <person name="Mayhew G.F."/>
            <person name="Gregor J."/>
            <person name="Davis N.W."/>
            <person name="Kirkpatrick H.A."/>
            <person name="Goeden M.A."/>
            <person name="Rose D.J."/>
            <person name="Mau B."/>
            <person name="Shao Y."/>
        </authorList>
    </citation>
    <scope>NUCLEOTIDE SEQUENCE [LARGE SCALE GENOMIC DNA]</scope>
    <source>
        <strain>K12 / MG1655 / ATCC 47076</strain>
    </source>
</reference>
<reference key="2">
    <citation type="journal article" date="2006" name="Mol. Syst. Biol.">
        <title>Highly accurate genome sequences of Escherichia coli K-12 strains MG1655 and W3110.</title>
        <authorList>
            <person name="Hayashi K."/>
            <person name="Morooka N."/>
            <person name="Yamamoto Y."/>
            <person name="Fujita K."/>
            <person name="Isono K."/>
            <person name="Choi S."/>
            <person name="Ohtsubo E."/>
            <person name="Baba T."/>
            <person name="Wanner B.L."/>
            <person name="Mori H."/>
            <person name="Horiuchi T."/>
        </authorList>
    </citation>
    <scope>NUCLEOTIDE SEQUENCE [LARGE SCALE GENOMIC DNA]</scope>
    <source>
        <strain>K12 / W3110 / ATCC 27325 / DSM 5911</strain>
    </source>
</reference>
<reference key="3">
    <citation type="journal article" date="1999" name="Electrophoresis">
        <title>Enrichment of low abundance proteins of Escherichia coli by hydroxyapatite chromatography.</title>
        <authorList>
            <person name="Fountoulakis M."/>
            <person name="Takacs M.-F."/>
            <person name="Berndt P."/>
            <person name="Langen H."/>
            <person name="Takacs B."/>
        </authorList>
    </citation>
    <scope>IDENTIFICATION BY MASS SPECTROMETRY</scope>
    <source>
        <strain>B / BL21</strain>
    </source>
</reference>
<sequence length="187" mass="20686">MNLQHHFLIAMPALQDPIFRRSVVYICEHNTNGAMGIIVNKPLENLKIEGILEKLKITPEPRDESIRLDKPVMLGGPLAEDRGFILHTPPSNFASSIRISDNTVMTTSRDVLETLGTDKQPSDVLVALGYASWEKGQLEQEILDNAWLTAPADLNILFKTPIADRWREAAKLIGVDILTMPGVAGHA</sequence>
<name>YQGE_ECOLI</name>
<evidence type="ECO:0000305" key="1"/>
<protein>
    <recommendedName>
        <fullName>UPF0301 protein YqgE</fullName>
    </recommendedName>
</protein>
<dbReference type="EMBL" id="U28377">
    <property type="protein sequence ID" value="AAA69115.1"/>
    <property type="status" value="ALT_INIT"/>
    <property type="molecule type" value="Genomic_DNA"/>
</dbReference>
<dbReference type="EMBL" id="U00096">
    <property type="protein sequence ID" value="AAC75985.2"/>
    <property type="molecule type" value="Genomic_DNA"/>
</dbReference>
<dbReference type="EMBL" id="AP009048">
    <property type="protein sequence ID" value="BAE77011.1"/>
    <property type="molecule type" value="Genomic_DNA"/>
</dbReference>
<dbReference type="RefSeq" id="NP_417423.4">
    <property type="nucleotide sequence ID" value="NC_000913.3"/>
</dbReference>
<dbReference type="RefSeq" id="WP_001053178.1">
    <property type="nucleotide sequence ID" value="NZ_STEB01000001.1"/>
</dbReference>
<dbReference type="SMR" id="P0A8W5"/>
<dbReference type="BioGRID" id="4259240">
    <property type="interactions" value="24"/>
</dbReference>
<dbReference type="DIP" id="DIP-36005N"/>
<dbReference type="FunCoup" id="P0A8W5">
    <property type="interactions" value="351"/>
</dbReference>
<dbReference type="IntAct" id="P0A8W5">
    <property type="interactions" value="9"/>
</dbReference>
<dbReference type="STRING" id="511145.b2948"/>
<dbReference type="jPOST" id="P0A8W5"/>
<dbReference type="PaxDb" id="511145-b2948"/>
<dbReference type="EnsemblBacteria" id="AAC75985">
    <property type="protein sequence ID" value="AAC75985"/>
    <property type="gene ID" value="b2948"/>
</dbReference>
<dbReference type="GeneID" id="947442"/>
<dbReference type="KEGG" id="ecj:JW2915"/>
<dbReference type="KEGG" id="eco:b2948"/>
<dbReference type="KEGG" id="ecoc:C3026_16135"/>
<dbReference type="PATRIC" id="fig|511145.12.peg.3041"/>
<dbReference type="EchoBASE" id="EB3074"/>
<dbReference type="eggNOG" id="COG1678">
    <property type="taxonomic scope" value="Bacteria"/>
</dbReference>
<dbReference type="HOGENOM" id="CLU_057596_1_0_6"/>
<dbReference type="InParanoid" id="P0A8W5"/>
<dbReference type="OMA" id="GAWYVVE"/>
<dbReference type="OrthoDB" id="9807486at2"/>
<dbReference type="PhylomeDB" id="P0A8W5"/>
<dbReference type="BioCyc" id="EcoCyc:G7524-MONOMER"/>
<dbReference type="PRO" id="PR:P0A8W5"/>
<dbReference type="Proteomes" id="UP000000625">
    <property type="component" value="Chromosome"/>
</dbReference>
<dbReference type="GO" id="GO:0005829">
    <property type="term" value="C:cytosol"/>
    <property type="evidence" value="ECO:0000314"/>
    <property type="project" value="EcoCyc"/>
</dbReference>
<dbReference type="FunFam" id="3.30.70.1300:FF:000001">
    <property type="entry name" value="UPF0301 protein YqgE"/>
    <property type="match status" value="1"/>
</dbReference>
<dbReference type="Gene3D" id="3.40.1740.10">
    <property type="entry name" value="VC0467-like"/>
    <property type="match status" value="1"/>
</dbReference>
<dbReference type="Gene3D" id="3.30.70.1300">
    <property type="entry name" value="VC0467-like domains"/>
    <property type="match status" value="1"/>
</dbReference>
<dbReference type="HAMAP" id="MF_00758">
    <property type="entry name" value="UPF0301"/>
    <property type="match status" value="1"/>
</dbReference>
<dbReference type="InterPro" id="IPR003774">
    <property type="entry name" value="AlgH-like"/>
</dbReference>
<dbReference type="NCBIfam" id="NF001266">
    <property type="entry name" value="PRK00228.1-1"/>
    <property type="match status" value="1"/>
</dbReference>
<dbReference type="PANTHER" id="PTHR30327">
    <property type="entry name" value="UNCHARACTERIZED PROTEIN YQGE"/>
    <property type="match status" value="1"/>
</dbReference>
<dbReference type="PANTHER" id="PTHR30327:SF1">
    <property type="entry name" value="UPF0301 PROTEIN YQGE"/>
    <property type="match status" value="1"/>
</dbReference>
<dbReference type="Pfam" id="PF02622">
    <property type="entry name" value="DUF179"/>
    <property type="match status" value="1"/>
</dbReference>
<dbReference type="SUPFAM" id="SSF143456">
    <property type="entry name" value="VC0467-like"/>
    <property type="match status" value="1"/>
</dbReference>
<accession>P0A8W5</accession>
<accession>P52049</accession>
<accession>P76648</accession>
<accession>Q2M9P5</accession>
<organism>
    <name type="scientific">Escherichia coli (strain K12)</name>
    <dbReference type="NCBI Taxonomy" id="83333"/>
    <lineage>
        <taxon>Bacteria</taxon>
        <taxon>Pseudomonadati</taxon>
        <taxon>Pseudomonadota</taxon>
        <taxon>Gammaproteobacteria</taxon>
        <taxon>Enterobacterales</taxon>
        <taxon>Enterobacteriaceae</taxon>
        <taxon>Escherichia</taxon>
    </lineage>
</organism>
<keyword id="KW-1185">Reference proteome</keyword>
<proteinExistence type="evidence at protein level"/>
<gene>
    <name type="primary">yqgE</name>
    <name type="ordered locus">b2948</name>
    <name type="ordered locus">JW2915</name>
</gene>
<comment type="similarity">
    <text evidence="1">Belongs to the UPF0301 (AlgH) family.</text>
</comment>
<comment type="sequence caution" evidence="1">
    <conflict type="erroneous initiation">
        <sequence resource="EMBL-CDS" id="AAA69115"/>
    </conflict>
    <text>Extended N-terminus.</text>
</comment>